<reference key="1">
    <citation type="submission" date="2007-08" db="EMBL/GenBank/DDBJ databases">
        <title>Complete sequence of Shewanella sediminis HAW-EB3.</title>
        <authorList>
            <consortium name="US DOE Joint Genome Institute"/>
            <person name="Copeland A."/>
            <person name="Lucas S."/>
            <person name="Lapidus A."/>
            <person name="Barry K."/>
            <person name="Glavina del Rio T."/>
            <person name="Dalin E."/>
            <person name="Tice H."/>
            <person name="Pitluck S."/>
            <person name="Chertkov O."/>
            <person name="Brettin T."/>
            <person name="Bruce D."/>
            <person name="Detter J.C."/>
            <person name="Han C."/>
            <person name="Schmutz J."/>
            <person name="Larimer F."/>
            <person name="Land M."/>
            <person name="Hauser L."/>
            <person name="Kyrpides N."/>
            <person name="Kim E."/>
            <person name="Zhao J.-S."/>
            <person name="Richardson P."/>
        </authorList>
    </citation>
    <scope>NUCLEOTIDE SEQUENCE [LARGE SCALE GENOMIC DNA]</scope>
    <source>
        <strain>HAW-EB3</strain>
    </source>
</reference>
<feature type="chain" id="PRO_1000076833" description="3-methyl-2-oxobutanoate hydroxymethyltransferase">
    <location>
        <begin position="1"/>
        <end position="264"/>
    </location>
</feature>
<feature type="active site" description="Proton acceptor" evidence="1">
    <location>
        <position position="181"/>
    </location>
</feature>
<feature type="binding site" evidence="1">
    <location>
        <begin position="45"/>
        <end position="46"/>
    </location>
    <ligand>
        <name>3-methyl-2-oxobutanoate</name>
        <dbReference type="ChEBI" id="CHEBI:11851"/>
    </ligand>
</feature>
<feature type="binding site" evidence="1">
    <location>
        <position position="45"/>
    </location>
    <ligand>
        <name>Mg(2+)</name>
        <dbReference type="ChEBI" id="CHEBI:18420"/>
    </ligand>
</feature>
<feature type="binding site" evidence="1">
    <location>
        <position position="84"/>
    </location>
    <ligand>
        <name>3-methyl-2-oxobutanoate</name>
        <dbReference type="ChEBI" id="CHEBI:11851"/>
    </ligand>
</feature>
<feature type="binding site" evidence="1">
    <location>
        <position position="84"/>
    </location>
    <ligand>
        <name>Mg(2+)</name>
        <dbReference type="ChEBI" id="CHEBI:18420"/>
    </ligand>
</feature>
<feature type="binding site" evidence="1">
    <location>
        <position position="112"/>
    </location>
    <ligand>
        <name>3-methyl-2-oxobutanoate</name>
        <dbReference type="ChEBI" id="CHEBI:11851"/>
    </ligand>
</feature>
<feature type="binding site" evidence="1">
    <location>
        <position position="114"/>
    </location>
    <ligand>
        <name>Mg(2+)</name>
        <dbReference type="ChEBI" id="CHEBI:18420"/>
    </ligand>
</feature>
<evidence type="ECO:0000255" key="1">
    <source>
        <dbReference type="HAMAP-Rule" id="MF_00156"/>
    </source>
</evidence>
<dbReference type="EC" id="2.1.2.11" evidence="1"/>
<dbReference type="EMBL" id="CP000821">
    <property type="protein sequence ID" value="ABV38507.1"/>
    <property type="molecule type" value="Genomic_DNA"/>
</dbReference>
<dbReference type="RefSeq" id="WP_012144237.1">
    <property type="nucleotide sequence ID" value="NC_009831.1"/>
</dbReference>
<dbReference type="SMR" id="A8G084"/>
<dbReference type="STRING" id="425104.Ssed_3903"/>
<dbReference type="KEGG" id="sse:Ssed_3903"/>
<dbReference type="eggNOG" id="COG0413">
    <property type="taxonomic scope" value="Bacteria"/>
</dbReference>
<dbReference type="HOGENOM" id="CLU_036645_1_0_6"/>
<dbReference type="OrthoDB" id="9781789at2"/>
<dbReference type="UniPathway" id="UPA00028">
    <property type="reaction ID" value="UER00003"/>
</dbReference>
<dbReference type="Proteomes" id="UP000002015">
    <property type="component" value="Chromosome"/>
</dbReference>
<dbReference type="GO" id="GO:0005737">
    <property type="term" value="C:cytoplasm"/>
    <property type="evidence" value="ECO:0007669"/>
    <property type="project" value="UniProtKB-SubCell"/>
</dbReference>
<dbReference type="GO" id="GO:0003864">
    <property type="term" value="F:3-methyl-2-oxobutanoate hydroxymethyltransferase activity"/>
    <property type="evidence" value="ECO:0007669"/>
    <property type="project" value="UniProtKB-UniRule"/>
</dbReference>
<dbReference type="GO" id="GO:0000287">
    <property type="term" value="F:magnesium ion binding"/>
    <property type="evidence" value="ECO:0007669"/>
    <property type="project" value="TreeGrafter"/>
</dbReference>
<dbReference type="GO" id="GO:0015940">
    <property type="term" value="P:pantothenate biosynthetic process"/>
    <property type="evidence" value="ECO:0007669"/>
    <property type="project" value="UniProtKB-UniRule"/>
</dbReference>
<dbReference type="CDD" id="cd06557">
    <property type="entry name" value="KPHMT-like"/>
    <property type="match status" value="1"/>
</dbReference>
<dbReference type="FunFam" id="3.20.20.60:FF:000003">
    <property type="entry name" value="3-methyl-2-oxobutanoate hydroxymethyltransferase"/>
    <property type="match status" value="1"/>
</dbReference>
<dbReference type="Gene3D" id="3.20.20.60">
    <property type="entry name" value="Phosphoenolpyruvate-binding domains"/>
    <property type="match status" value="1"/>
</dbReference>
<dbReference type="HAMAP" id="MF_00156">
    <property type="entry name" value="PanB"/>
    <property type="match status" value="1"/>
</dbReference>
<dbReference type="InterPro" id="IPR003700">
    <property type="entry name" value="Pantoate_hydroxy_MeTrfase"/>
</dbReference>
<dbReference type="InterPro" id="IPR015813">
    <property type="entry name" value="Pyrv/PenolPyrv_kinase-like_dom"/>
</dbReference>
<dbReference type="InterPro" id="IPR040442">
    <property type="entry name" value="Pyrv_kinase-like_dom_sf"/>
</dbReference>
<dbReference type="NCBIfam" id="TIGR00222">
    <property type="entry name" value="panB"/>
    <property type="match status" value="1"/>
</dbReference>
<dbReference type="NCBIfam" id="NF001452">
    <property type="entry name" value="PRK00311.1"/>
    <property type="match status" value="1"/>
</dbReference>
<dbReference type="PANTHER" id="PTHR20881">
    <property type="entry name" value="3-METHYL-2-OXOBUTANOATE HYDROXYMETHYLTRANSFERASE"/>
    <property type="match status" value="1"/>
</dbReference>
<dbReference type="PANTHER" id="PTHR20881:SF0">
    <property type="entry name" value="3-METHYL-2-OXOBUTANOATE HYDROXYMETHYLTRANSFERASE"/>
    <property type="match status" value="1"/>
</dbReference>
<dbReference type="Pfam" id="PF02548">
    <property type="entry name" value="Pantoate_transf"/>
    <property type="match status" value="1"/>
</dbReference>
<dbReference type="PIRSF" id="PIRSF000388">
    <property type="entry name" value="Pantoate_hydroxy_MeTrfase"/>
    <property type="match status" value="1"/>
</dbReference>
<dbReference type="SUPFAM" id="SSF51621">
    <property type="entry name" value="Phosphoenolpyruvate/pyruvate domain"/>
    <property type="match status" value="1"/>
</dbReference>
<comment type="function">
    <text evidence="1">Catalyzes the reversible reaction in which hydroxymethyl group from 5,10-methylenetetrahydrofolate is transferred onto alpha-ketoisovalerate to form ketopantoate.</text>
</comment>
<comment type="catalytic activity">
    <reaction evidence="1">
        <text>3-methyl-2-oxobutanoate + (6R)-5,10-methylene-5,6,7,8-tetrahydrofolate + H2O = 2-dehydropantoate + (6S)-5,6,7,8-tetrahydrofolate</text>
        <dbReference type="Rhea" id="RHEA:11824"/>
        <dbReference type="ChEBI" id="CHEBI:11561"/>
        <dbReference type="ChEBI" id="CHEBI:11851"/>
        <dbReference type="ChEBI" id="CHEBI:15377"/>
        <dbReference type="ChEBI" id="CHEBI:15636"/>
        <dbReference type="ChEBI" id="CHEBI:57453"/>
        <dbReference type="EC" id="2.1.2.11"/>
    </reaction>
</comment>
<comment type="cofactor">
    <cofactor evidence="1">
        <name>Mg(2+)</name>
        <dbReference type="ChEBI" id="CHEBI:18420"/>
    </cofactor>
    <text evidence="1">Binds 1 Mg(2+) ion per subunit.</text>
</comment>
<comment type="pathway">
    <text evidence="1">Cofactor biosynthesis; (R)-pantothenate biosynthesis; (R)-pantoate from 3-methyl-2-oxobutanoate: step 1/2.</text>
</comment>
<comment type="subunit">
    <text evidence="1">Homodecamer; pentamer of dimers.</text>
</comment>
<comment type="subcellular location">
    <subcellularLocation>
        <location evidence="1">Cytoplasm</location>
    </subcellularLocation>
</comment>
<comment type="similarity">
    <text evidence="1">Belongs to the PanB family.</text>
</comment>
<gene>
    <name evidence="1" type="primary">panB</name>
    <name type="ordered locus">Ssed_3903</name>
</gene>
<proteinExistence type="inferred from homology"/>
<accession>A8G084</accession>
<name>PANB_SHESH</name>
<organism>
    <name type="scientific">Shewanella sediminis (strain HAW-EB3)</name>
    <dbReference type="NCBI Taxonomy" id="425104"/>
    <lineage>
        <taxon>Bacteria</taxon>
        <taxon>Pseudomonadati</taxon>
        <taxon>Pseudomonadota</taxon>
        <taxon>Gammaproteobacteria</taxon>
        <taxon>Alteromonadales</taxon>
        <taxon>Shewanellaceae</taxon>
        <taxon>Shewanella</taxon>
    </lineage>
</organism>
<keyword id="KW-0963">Cytoplasm</keyword>
<keyword id="KW-0460">Magnesium</keyword>
<keyword id="KW-0479">Metal-binding</keyword>
<keyword id="KW-0566">Pantothenate biosynthesis</keyword>
<keyword id="KW-1185">Reference proteome</keyword>
<keyword id="KW-0808">Transferase</keyword>
<protein>
    <recommendedName>
        <fullName evidence="1">3-methyl-2-oxobutanoate hydroxymethyltransferase</fullName>
        <ecNumber evidence="1">2.1.2.11</ecNumber>
    </recommendedName>
    <alternativeName>
        <fullName evidence="1">Ketopantoate hydroxymethyltransferase</fullName>
        <shortName evidence="1">KPHMT</shortName>
    </alternativeName>
</protein>
<sequence>MSKITSSTLLKFKQEGKKFTALTAYDASFASAFDSEGIDVLLVGDSMGMVLQGHDDTLPVTVEDIAYHTRCVRRGIKRSLLIADMPFMSYATSEQAMTNATALMQAGANMVKLEGGHWLLDTISKLTERGIPVCAHLGLTPQSVHVFGGFKVQGRDSDNAQRILDEAKAIEAAGAQLLVVECIPAPLAKTISEALTIPVIGIGAGADTDGQILVMHDVLGISSGYIPRFSKNYLKQTGEIREAIRAYIDEVAQGIFPGSDHTFN</sequence>